<gene>
    <name evidence="1" type="primary">gcvH</name>
    <name type="ordered locus">Paes_0534</name>
</gene>
<dbReference type="EMBL" id="CP001108">
    <property type="protein sequence ID" value="ACF45590.1"/>
    <property type="molecule type" value="Genomic_DNA"/>
</dbReference>
<dbReference type="RefSeq" id="WP_012505127.1">
    <property type="nucleotide sequence ID" value="NC_011059.1"/>
</dbReference>
<dbReference type="SMR" id="B4S5J3"/>
<dbReference type="STRING" id="290512.Paes_0534"/>
<dbReference type="KEGG" id="paa:Paes_0534"/>
<dbReference type="eggNOG" id="COG0509">
    <property type="taxonomic scope" value="Bacteria"/>
</dbReference>
<dbReference type="HOGENOM" id="CLU_097408_2_2_10"/>
<dbReference type="Proteomes" id="UP000002725">
    <property type="component" value="Chromosome"/>
</dbReference>
<dbReference type="GO" id="GO:0005829">
    <property type="term" value="C:cytosol"/>
    <property type="evidence" value="ECO:0007669"/>
    <property type="project" value="TreeGrafter"/>
</dbReference>
<dbReference type="GO" id="GO:0005960">
    <property type="term" value="C:glycine cleavage complex"/>
    <property type="evidence" value="ECO:0007669"/>
    <property type="project" value="InterPro"/>
</dbReference>
<dbReference type="GO" id="GO:0019464">
    <property type="term" value="P:glycine decarboxylation via glycine cleavage system"/>
    <property type="evidence" value="ECO:0007669"/>
    <property type="project" value="UniProtKB-UniRule"/>
</dbReference>
<dbReference type="CDD" id="cd06848">
    <property type="entry name" value="GCS_H"/>
    <property type="match status" value="1"/>
</dbReference>
<dbReference type="Gene3D" id="2.40.50.100">
    <property type="match status" value="1"/>
</dbReference>
<dbReference type="HAMAP" id="MF_00272">
    <property type="entry name" value="GcvH"/>
    <property type="match status" value="1"/>
</dbReference>
<dbReference type="InterPro" id="IPR003016">
    <property type="entry name" value="2-oxoA_DH_lipoyl-BS"/>
</dbReference>
<dbReference type="InterPro" id="IPR000089">
    <property type="entry name" value="Biotin_lipoyl"/>
</dbReference>
<dbReference type="InterPro" id="IPR002930">
    <property type="entry name" value="GCV_H"/>
</dbReference>
<dbReference type="InterPro" id="IPR033753">
    <property type="entry name" value="GCV_H/Fam206"/>
</dbReference>
<dbReference type="InterPro" id="IPR017453">
    <property type="entry name" value="GCV_H_sub"/>
</dbReference>
<dbReference type="InterPro" id="IPR011053">
    <property type="entry name" value="Single_hybrid_motif"/>
</dbReference>
<dbReference type="NCBIfam" id="TIGR00527">
    <property type="entry name" value="gcvH"/>
    <property type="match status" value="1"/>
</dbReference>
<dbReference type="NCBIfam" id="NF002270">
    <property type="entry name" value="PRK01202.1"/>
    <property type="match status" value="1"/>
</dbReference>
<dbReference type="PANTHER" id="PTHR11715">
    <property type="entry name" value="GLYCINE CLEAVAGE SYSTEM H PROTEIN"/>
    <property type="match status" value="1"/>
</dbReference>
<dbReference type="PANTHER" id="PTHR11715:SF3">
    <property type="entry name" value="GLYCINE CLEAVAGE SYSTEM H PROTEIN-RELATED"/>
    <property type="match status" value="1"/>
</dbReference>
<dbReference type="Pfam" id="PF01597">
    <property type="entry name" value="GCV_H"/>
    <property type="match status" value="1"/>
</dbReference>
<dbReference type="SUPFAM" id="SSF51230">
    <property type="entry name" value="Single hybrid motif"/>
    <property type="match status" value="1"/>
</dbReference>
<dbReference type="PROSITE" id="PS50968">
    <property type="entry name" value="BIOTINYL_LIPOYL"/>
    <property type="match status" value="1"/>
</dbReference>
<dbReference type="PROSITE" id="PS00189">
    <property type="entry name" value="LIPOYL"/>
    <property type="match status" value="1"/>
</dbReference>
<organism>
    <name type="scientific">Prosthecochloris aestuarii (strain DSM 271 / SK 413)</name>
    <dbReference type="NCBI Taxonomy" id="290512"/>
    <lineage>
        <taxon>Bacteria</taxon>
        <taxon>Pseudomonadati</taxon>
        <taxon>Chlorobiota</taxon>
        <taxon>Chlorobiia</taxon>
        <taxon>Chlorobiales</taxon>
        <taxon>Chlorobiaceae</taxon>
        <taxon>Prosthecochloris</taxon>
    </lineage>
</organism>
<comment type="function">
    <text evidence="1">The glycine cleavage system catalyzes the degradation of glycine. The H protein shuttles the methylamine group of glycine from the P protein to the T protein.</text>
</comment>
<comment type="cofactor">
    <cofactor evidence="1">
        <name>(R)-lipoate</name>
        <dbReference type="ChEBI" id="CHEBI:83088"/>
    </cofactor>
    <text evidence="1">Binds 1 lipoyl cofactor covalently.</text>
</comment>
<comment type="subunit">
    <text evidence="1">The glycine cleavage system is composed of four proteins: P, T, L and H.</text>
</comment>
<comment type="similarity">
    <text evidence="1">Belongs to the GcvH family.</text>
</comment>
<feature type="chain" id="PRO_1000114538" description="Glycine cleavage system H protein">
    <location>
        <begin position="1"/>
        <end position="127"/>
    </location>
</feature>
<feature type="domain" description="Lipoyl-binding" evidence="2">
    <location>
        <begin position="24"/>
        <end position="105"/>
    </location>
</feature>
<feature type="modified residue" description="N6-lipoyllysine" evidence="1">
    <location>
        <position position="65"/>
    </location>
</feature>
<protein>
    <recommendedName>
        <fullName evidence="1">Glycine cleavage system H protein</fullName>
    </recommendedName>
</protein>
<name>GCSH_PROA2</name>
<sequence>MNIPADLLYTKDHEWIKVLDDGTTALVGITDFAQSELGDIVFVETKPVGTELSEHDVFGTVEAVKTVADLFAPVDGVIVEVNEALDAAEVVNSSPYEDGWMVKVSLKDASQFDALMSAAEYSEMVGE</sequence>
<proteinExistence type="inferred from homology"/>
<accession>B4S5J3</accession>
<reference key="1">
    <citation type="submission" date="2008-06" db="EMBL/GenBank/DDBJ databases">
        <title>Complete sequence of chromosome of Prosthecochloris aestuarii DSM 271.</title>
        <authorList>
            <consortium name="US DOE Joint Genome Institute"/>
            <person name="Lucas S."/>
            <person name="Copeland A."/>
            <person name="Lapidus A."/>
            <person name="Glavina del Rio T."/>
            <person name="Dalin E."/>
            <person name="Tice H."/>
            <person name="Bruce D."/>
            <person name="Goodwin L."/>
            <person name="Pitluck S."/>
            <person name="Schmutz J."/>
            <person name="Larimer F."/>
            <person name="Land M."/>
            <person name="Hauser L."/>
            <person name="Kyrpides N."/>
            <person name="Anderson I."/>
            <person name="Liu Z."/>
            <person name="Li T."/>
            <person name="Zhao F."/>
            <person name="Overmann J."/>
            <person name="Bryant D.A."/>
            <person name="Richardson P."/>
        </authorList>
    </citation>
    <scope>NUCLEOTIDE SEQUENCE [LARGE SCALE GENOMIC DNA]</scope>
    <source>
        <strain>DSM 271 / SK 413</strain>
    </source>
</reference>
<keyword id="KW-0450">Lipoyl</keyword>
<evidence type="ECO:0000255" key="1">
    <source>
        <dbReference type="HAMAP-Rule" id="MF_00272"/>
    </source>
</evidence>
<evidence type="ECO:0000255" key="2">
    <source>
        <dbReference type="PROSITE-ProRule" id="PRU01066"/>
    </source>
</evidence>